<gene>
    <name evidence="1" type="primary">pdxT</name>
    <name type="ordered locus">Msm_0371</name>
</gene>
<sequence>MITIGILNLQGAVSEHYDITKKAIENMGIEAEAISVRYADEVANCDGVIISGGESTVIGKIIKERGIDKVIKDNRIPVFGTCAGMVLLGKKTDFDQPLLGIMDISVKRNAFGRQVDSFESPISILGEDYLGVFIRAPSLDDYDKTKEDIKVLSKLDDEIIAIQQGHNIAIAFHPELTDDTRIHEYFIEEVLNCVE</sequence>
<evidence type="ECO:0000255" key="1">
    <source>
        <dbReference type="HAMAP-Rule" id="MF_01615"/>
    </source>
</evidence>
<reference key="1">
    <citation type="journal article" date="2007" name="Proc. Natl. Acad. Sci. U.S.A.">
        <title>Genomic and metabolic adaptations of Methanobrevibacter smithii to the human gut.</title>
        <authorList>
            <person name="Samuel B.S."/>
            <person name="Hansen E.E."/>
            <person name="Manchester J.K."/>
            <person name="Coutinho P.M."/>
            <person name="Henrissat B."/>
            <person name="Fulton R."/>
            <person name="Latreille P."/>
            <person name="Kim K."/>
            <person name="Wilson R.K."/>
            <person name="Gordon J.I."/>
        </authorList>
    </citation>
    <scope>NUCLEOTIDE SEQUENCE [LARGE SCALE GENOMIC DNA]</scope>
    <source>
        <strain>ATCC 35061 / DSM 861 / OCM 144 / PS</strain>
    </source>
</reference>
<dbReference type="EC" id="4.3.3.6" evidence="1"/>
<dbReference type="EC" id="3.5.1.2" evidence="1"/>
<dbReference type="EMBL" id="CP000678">
    <property type="protein sequence ID" value="ABQ86576.1"/>
    <property type="molecule type" value="Genomic_DNA"/>
</dbReference>
<dbReference type="RefSeq" id="WP_004036878.1">
    <property type="nucleotide sequence ID" value="NZ_CP117965.1"/>
</dbReference>
<dbReference type="SMR" id="A5UK48"/>
<dbReference type="STRING" id="420247.Msm_0371"/>
<dbReference type="EnsemblBacteria" id="ABQ86576">
    <property type="protein sequence ID" value="ABQ86576"/>
    <property type="gene ID" value="Msm_0371"/>
</dbReference>
<dbReference type="GeneID" id="78816998"/>
<dbReference type="KEGG" id="msi:Msm_0371"/>
<dbReference type="PATRIC" id="fig|420247.28.peg.373"/>
<dbReference type="eggNOG" id="arCOG00034">
    <property type="taxonomic scope" value="Archaea"/>
</dbReference>
<dbReference type="HOGENOM" id="CLU_069674_2_0_2"/>
<dbReference type="UniPathway" id="UPA00245"/>
<dbReference type="Proteomes" id="UP000001992">
    <property type="component" value="Chromosome"/>
</dbReference>
<dbReference type="GO" id="GO:0005829">
    <property type="term" value="C:cytosol"/>
    <property type="evidence" value="ECO:0007669"/>
    <property type="project" value="TreeGrafter"/>
</dbReference>
<dbReference type="GO" id="GO:1903600">
    <property type="term" value="C:glutaminase complex"/>
    <property type="evidence" value="ECO:0007669"/>
    <property type="project" value="TreeGrafter"/>
</dbReference>
<dbReference type="GO" id="GO:0004359">
    <property type="term" value="F:glutaminase activity"/>
    <property type="evidence" value="ECO:0007669"/>
    <property type="project" value="UniProtKB-UniRule"/>
</dbReference>
<dbReference type="GO" id="GO:0036381">
    <property type="term" value="F:pyridoxal 5'-phosphate synthase (glutamine hydrolysing) activity"/>
    <property type="evidence" value="ECO:0007669"/>
    <property type="project" value="UniProtKB-UniRule"/>
</dbReference>
<dbReference type="GO" id="GO:0006543">
    <property type="term" value="P:glutamine catabolic process"/>
    <property type="evidence" value="ECO:0007669"/>
    <property type="project" value="UniProtKB-UniRule"/>
</dbReference>
<dbReference type="GO" id="GO:0042823">
    <property type="term" value="P:pyridoxal phosphate biosynthetic process"/>
    <property type="evidence" value="ECO:0007669"/>
    <property type="project" value="UniProtKB-UniRule"/>
</dbReference>
<dbReference type="GO" id="GO:0008614">
    <property type="term" value="P:pyridoxine metabolic process"/>
    <property type="evidence" value="ECO:0007669"/>
    <property type="project" value="TreeGrafter"/>
</dbReference>
<dbReference type="CDD" id="cd01749">
    <property type="entry name" value="GATase1_PB"/>
    <property type="match status" value="1"/>
</dbReference>
<dbReference type="FunFam" id="3.40.50.880:FF:000010">
    <property type="entry name" value="uncharacterized protein LOC100176842 isoform X2"/>
    <property type="match status" value="1"/>
</dbReference>
<dbReference type="Gene3D" id="3.40.50.880">
    <property type="match status" value="1"/>
</dbReference>
<dbReference type="HAMAP" id="MF_01615">
    <property type="entry name" value="PdxT"/>
    <property type="match status" value="1"/>
</dbReference>
<dbReference type="InterPro" id="IPR029062">
    <property type="entry name" value="Class_I_gatase-like"/>
</dbReference>
<dbReference type="InterPro" id="IPR002161">
    <property type="entry name" value="PdxT/SNO"/>
</dbReference>
<dbReference type="NCBIfam" id="TIGR03800">
    <property type="entry name" value="PLP_synth_Pdx2"/>
    <property type="match status" value="1"/>
</dbReference>
<dbReference type="PANTHER" id="PTHR31559">
    <property type="entry name" value="PYRIDOXAL 5'-PHOSPHATE SYNTHASE SUBUNIT SNO"/>
    <property type="match status" value="1"/>
</dbReference>
<dbReference type="PANTHER" id="PTHR31559:SF0">
    <property type="entry name" value="PYRIDOXAL 5'-PHOSPHATE SYNTHASE SUBUNIT SNO1-RELATED"/>
    <property type="match status" value="1"/>
</dbReference>
<dbReference type="Pfam" id="PF01174">
    <property type="entry name" value="SNO"/>
    <property type="match status" value="1"/>
</dbReference>
<dbReference type="PIRSF" id="PIRSF005639">
    <property type="entry name" value="Glut_amidoT_SNO"/>
    <property type="match status" value="1"/>
</dbReference>
<dbReference type="SUPFAM" id="SSF52317">
    <property type="entry name" value="Class I glutamine amidotransferase-like"/>
    <property type="match status" value="1"/>
</dbReference>
<dbReference type="PROSITE" id="PS51130">
    <property type="entry name" value="PDXT_SNO_2"/>
    <property type="match status" value="1"/>
</dbReference>
<feature type="chain" id="PRO_1000069465" description="Pyridoxal 5'-phosphate synthase subunit PdxT">
    <location>
        <begin position="1"/>
        <end position="195"/>
    </location>
</feature>
<feature type="active site" description="Nucleophile" evidence="1">
    <location>
        <position position="82"/>
    </location>
</feature>
<feature type="active site" description="Charge relay system" evidence="1">
    <location>
        <position position="173"/>
    </location>
</feature>
<feature type="active site" description="Charge relay system" evidence="1">
    <location>
        <position position="175"/>
    </location>
</feature>
<feature type="binding site" evidence="1">
    <location>
        <begin position="53"/>
        <end position="55"/>
    </location>
    <ligand>
        <name>L-glutamine</name>
        <dbReference type="ChEBI" id="CHEBI:58359"/>
    </ligand>
</feature>
<feature type="binding site" evidence="1">
    <location>
        <position position="108"/>
    </location>
    <ligand>
        <name>L-glutamine</name>
        <dbReference type="ChEBI" id="CHEBI:58359"/>
    </ligand>
</feature>
<feature type="binding site" evidence="1">
    <location>
        <begin position="134"/>
        <end position="135"/>
    </location>
    <ligand>
        <name>L-glutamine</name>
        <dbReference type="ChEBI" id="CHEBI:58359"/>
    </ligand>
</feature>
<organism>
    <name type="scientific">Methanobrevibacter smithii (strain ATCC 35061 / DSM 861 / OCM 144 / PS)</name>
    <dbReference type="NCBI Taxonomy" id="420247"/>
    <lineage>
        <taxon>Archaea</taxon>
        <taxon>Methanobacteriati</taxon>
        <taxon>Methanobacteriota</taxon>
        <taxon>Methanomada group</taxon>
        <taxon>Methanobacteria</taxon>
        <taxon>Methanobacteriales</taxon>
        <taxon>Methanobacteriaceae</taxon>
        <taxon>Methanobrevibacter</taxon>
    </lineage>
</organism>
<name>PDXT_METS3</name>
<keyword id="KW-0315">Glutamine amidotransferase</keyword>
<keyword id="KW-0378">Hydrolase</keyword>
<keyword id="KW-0456">Lyase</keyword>
<keyword id="KW-0663">Pyridoxal phosphate</keyword>
<accession>A5UK48</accession>
<protein>
    <recommendedName>
        <fullName evidence="1">Pyridoxal 5'-phosphate synthase subunit PdxT</fullName>
        <ecNumber evidence="1">4.3.3.6</ecNumber>
    </recommendedName>
    <alternativeName>
        <fullName evidence="1">Pdx2</fullName>
    </alternativeName>
    <alternativeName>
        <fullName evidence="1">Pyridoxal 5'-phosphate synthase glutaminase subunit</fullName>
        <ecNumber evidence="1">3.5.1.2</ecNumber>
    </alternativeName>
</protein>
<comment type="function">
    <text evidence="1">Catalyzes the hydrolysis of glutamine to glutamate and ammonia as part of the biosynthesis of pyridoxal 5'-phosphate. The resulting ammonia molecule is channeled to the active site of PdxS.</text>
</comment>
<comment type="catalytic activity">
    <reaction evidence="1">
        <text>aldehydo-D-ribose 5-phosphate + D-glyceraldehyde 3-phosphate + L-glutamine = pyridoxal 5'-phosphate + L-glutamate + phosphate + 3 H2O + H(+)</text>
        <dbReference type="Rhea" id="RHEA:31507"/>
        <dbReference type="ChEBI" id="CHEBI:15377"/>
        <dbReference type="ChEBI" id="CHEBI:15378"/>
        <dbReference type="ChEBI" id="CHEBI:29985"/>
        <dbReference type="ChEBI" id="CHEBI:43474"/>
        <dbReference type="ChEBI" id="CHEBI:58273"/>
        <dbReference type="ChEBI" id="CHEBI:58359"/>
        <dbReference type="ChEBI" id="CHEBI:59776"/>
        <dbReference type="ChEBI" id="CHEBI:597326"/>
        <dbReference type="EC" id="4.3.3.6"/>
    </reaction>
</comment>
<comment type="catalytic activity">
    <reaction evidence="1">
        <text>L-glutamine + H2O = L-glutamate + NH4(+)</text>
        <dbReference type="Rhea" id="RHEA:15889"/>
        <dbReference type="ChEBI" id="CHEBI:15377"/>
        <dbReference type="ChEBI" id="CHEBI:28938"/>
        <dbReference type="ChEBI" id="CHEBI:29985"/>
        <dbReference type="ChEBI" id="CHEBI:58359"/>
        <dbReference type="EC" id="3.5.1.2"/>
    </reaction>
</comment>
<comment type="pathway">
    <text evidence="1">Cofactor biosynthesis; pyridoxal 5'-phosphate biosynthesis.</text>
</comment>
<comment type="subunit">
    <text evidence="1">In the presence of PdxS, forms a dodecamer of heterodimers. Only shows activity in the heterodimer.</text>
</comment>
<comment type="similarity">
    <text evidence="1">Belongs to the glutaminase PdxT/SNO family.</text>
</comment>
<proteinExistence type="inferred from homology"/>